<keyword id="KW-0067">ATP-binding</keyword>
<keyword id="KW-1003">Cell membrane</keyword>
<keyword id="KW-1015">Disulfide bond</keyword>
<keyword id="KW-0245">EGF-like domain</keyword>
<keyword id="KW-0325">Glycoprotein</keyword>
<keyword id="KW-0418">Kinase</keyword>
<keyword id="KW-0430">Lectin</keyword>
<keyword id="KW-0472">Membrane</keyword>
<keyword id="KW-0547">Nucleotide-binding</keyword>
<keyword id="KW-0597">Phosphoprotein</keyword>
<keyword id="KW-0675">Receptor</keyword>
<keyword id="KW-1185">Reference proteome</keyword>
<keyword id="KW-0677">Repeat</keyword>
<keyword id="KW-0723">Serine/threonine-protein kinase</keyword>
<keyword id="KW-0732">Signal</keyword>
<keyword id="KW-0808">Transferase</keyword>
<keyword id="KW-0812">Transmembrane</keyword>
<keyword id="KW-1133">Transmembrane helix</keyword>
<sequence>MAVKTPFLKLLPLLLLLLHFPFSFSTIPLGSVIYASGSNQNWPSPNSTFSVSFVPSPSPNSFLAAVSFAGSVPIWSAGTVDSRGSLRLHTSGSLRLTNGSGTTVWDSKTDRLGVTSGSIEDTGEFILLNNRSVPVWSSFDNPTDTIVQSQNFTAGKILRSGLYSFQLERSGNLTLRWNTSAIYWNHGLNSSFSSNLSSPRLSLQTNGVVSIFESNLLGGAEIVYSGDYGDSNTFRFLKLDDDGNLRIYSSASRNSGPVNAHWSAVDQCLVYGYCGNFGICSYNDTNPICSCPSRNFDFVDVNDRRKGCKRKVELSDCSGNTTMLDLVHTRLFTYEDDPNSESFFAGSSPCRANCLSSVLCLASVSMSDGSGNCWQKHPGSFFTGYQWPSVPSTSYVKVCGPVVANTLERATKGDDNNSKVHLWIVAVAVIAGLLGLVAVEIGLWWCCCRKNPRFGTLSSHYTLLEYASGAPVQFTYKELQRCTKSFKEKLGAGGFGTVYRGVLTNRTVVAVKQLEGIEQGEKQFRMEVATISSTHHLNLVRLIGFCSQGRHRLLVYEFMRNGSLDNFLFTTDSAKFLTWEYRFNIALGTAKGITYLHEECRDCIVHCDIKPENILVDDNFAAKVSDFGLAKLLNPKDNRYNMSSVRGTRGYLAPEWLANLPITSKSDVYSYGMVLLELVSGKRNFDVSEKTNHKKFSIWAYEEFEKGNTKAILDTRLSEDQTVDMEQVMRMVKTSFWCIQEQPLQRPTMGKVVQMLEGITEIKNPLCPKTISEVSFSGNSMSTSHASMFVASGPTRSSSFSATRSFQTMGITSSGPASTRISEGSMLGS</sequence>
<gene>
    <name type="ordered locus">At1g34300</name>
    <name type="ORF">F23M19.5</name>
</gene>
<dbReference type="EC" id="2.7.11.1"/>
<dbReference type="EMBL" id="AC007454">
    <property type="protein sequence ID" value="AAD39605.1"/>
    <property type="molecule type" value="Genomic_DNA"/>
</dbReference>
<dbReference type="EMBL" id="CP002684">
    <property type="protein sequence ID" value="AEE31694.1"/>
    <property type="molecule type" value="Genomic_DNA"/>
</dbReference>
<dbReference type="EMBL" id="AY090246">
    <property type="protein sequence ID" value="AAL90909.1"/>
    <property type="molecule type" value="mRNA"/>
</dbReference>
<dbReference type="EMBL" id="BT001084">
    <property type="protein sequence ID" value="AAN46865.1"/>
    <property type="molecule type" value="mRNA"/>
</dbReference>
<dbReference type="PIR" id="B86467">
    <property type="entry name" value="B86467"/>
</dbReference>
<dbReference type="RefSeq" id="NP_174690.1">
    <property type="nucleotide sequence ID" value="NM_103152.4"/>
</dbReference>
<dbReference type="SMR" id="Q9XID3"/>
<dbReference type="FunCoup" id="Q9XID3">
    <property type="interactions" value="1212"/>
</dbReference>
<dbReference type="IntAct" id="Q9XID3">
    <property type="interactions" value="2"/>
</dbReference>
<dbReference type="STRING" id="3702.Q9XID3"/>
<dbReference type="GlyGen" id="Q9XID3">
    <property type="glycosylation" value="12 sites"/>
</dbReference>
<dbReference type="iPTMnet" id="Q9XID3"/>
<dbReference type="PaxDb" id="3702-AT1G34300.1"/>
<dbReference type="ProteomicsDB" id="242417"/>
<dbReference type="EnsemblPlants" id="AT1G34300.1">
    <property type="protein sequence ID" value="AT1G34300.1"/>
    <property type="gene ID" value="AT1G34300"/>
</dbReference>
<dbReference type="GeneID" id="840330"/>
<dbReference type="Gramene" id="AT1G34300.1">
    <property type="protein sequence ID" value="AT1G34300.1"/>
    <property type="gene ID" value="AT1G34300"/>
</dbReference>
<dbReference type="KEGG" id="ath:AT1G34300"/>
<dbReference type="Araport" id="AT1G34300"/>
<dbReference type="TAIR" id="AT1G34300"/>
<dbReference type="eggNOG" id="ENOG502QRWA">
    <property type="taxonomic scope" value="Eukaryota"/>
</dbReference>
<dbReference type="HOGENOM" id="CLU_000288_116_2_1"/>
<dbReference type="InParanoid" id="Q9XID3"/>
<dbReference type="OMA" id="QEPYMTM"/>
<dbReference type="PhylomeDB" id="Q9XID3"/>
<dbReference type="PRO" id="PR:Q9XID3"/>
<dbReference type="Proteomes" id="UP000006548">
    <property type="component" value="Chromosome 1"/>
</dbReference>
<dbReference type="ExpressionAtlas" id="Q9XID3">
    <property type="expression patterns" value="baseline and differential"/>
</dbReference>
<dbReference type="GO" id="GO:0005886">
    <property type="term" value="C:plasma membrane"/>
    <property type="evidence" value="ECO:0007005"/>
    <property type="project" value="TAIR"/>
</dbReference>
<dbReference type="GO" id="GO:0005524">
    <property type="term" value="F:ATP binding"/>
    <property type="evidence" value="ECO:0007669"/>
    <property type="project" value="UniProtKB-KW"/>
</dbReference>
<dbReference type="GO" id="GO:0005516">
    <property type="term" value="F:calmodulin binding"/>
    <property type="evidence" value="ECO:0000250"/>
    <property type="project" value="UniProtKB"/>
</dbReference>
<dbReference type="GO" id="GO:0030246">
    <property type="term" value="F:carbohydrate binding"/>
    <property type="evidence" value="ECO:0007669"/>
    <property type="project" value="UniProtKB-KW"/>
</dbReference>
<dbReference type="GO" id="GO:0106310">
    <property type="term" value="F:protein serine kinase activity"/>
    <property type="evidence" value="ECO:0007669"/>
    <property type="project" value="RHEA"/>
</dbReference>
<dbReference type="GO" id="GO:0004674">
    <property type="term" value="F:protein serine/threonine kinase activity"/>
    <property type="evidence" value="ECO:0000250"/>
    <property type="project" value="UniProtKB"/>
</dbReference>
<dbReference type="GO" id="GO:0031625">
    <property type="term" value="F:ubiquitin protein ligase binding"/>
    <property type="evidence" value="ECO:0007669"/>
    <property type="project" value="UniProtKB-ARBA"/>
</dbReference>
<dbReference type="GO" id="GO:0048544">
    <property type="term" value="P:recognition of pollen"/>
    <property type="evidence" value="ECO:0007669"/>
    <property type="project" value="InterPro"/>
</dbReference>
<dbReference type="CDD" id="cd14066">
    <property type="entry name" value="STKc_IRAK"/>
    <property type="match status" value="1"/>
</dbReference>
<dbReference type="FunFam" id="1.10.510.10:FF:000237">
    <property type="entry name" value="G-type lectin S-receptor-like serine/threonine-protein kinase"/>
    <property type="match status" value="1"/>
</dbReference>
<dbReference type="FunFam" id="2.90.10.10:FF:000016">
    <property type="entry name" value="G-type lectin S-receptor-like serine/threonine-protein kinase"/>
    <property type="match status" value="1"/>
</dbReference>
<dbReference type="FunFam" id="2.90.10.10:FF:000025">
    <property type="entry name" value="G-type lectin S-receptor-like serine/threonine-protein kinase"/>
    <property type="match status" value="1"/>
</dbReference>
<dbReference type="FunFam" id="3.30.200.20:FF:000059">
    <property type="entry name" value="S-receptor-like serine/threonine-protein kinase"/>
    <property type="match status" value="1"/>
</dbReference>
<dbReference type="Gene3D" id="2.90.10.10">
    <property type="entry name" value="Bulb-type lectin domain"/>
    <property type="match status" value="2"/>
</dbReference>
<dbReference type="Gene3D" id="3.30.200.20">
    <property type="entry name" value="Phosphorylase Kinase, domain 1"/>
    <property type="match status" value="1"/>
</dbReference>
<dbReference type="Gene3D" id="1.10.510.10">
    <property type="entry name" value="Transferase(Phosphotransferase) domain 1"/>
    <property type="match status" value="1"/>
</dbReference>
<dbReference type="InterPro" id="IPR001480">
    <property type="entry name" value="Bulb-type_lectin_dom"/>
</dbReference>
<dbReference type="InterPro" id="IPR036426">
    <property type="entry name" value="Bulb-type_lectin_dom_sf"/>
</dbReference>
<dbReference type="InterPro" id="IPR011009">
    <property type="entry name" value="Kinase-like_dom_sf"/>
</dbReference>
<dbReference type="InterPro" id="IPR000719">
    <property type="entry name" value="Prot_kinase_dom"/>
</dbReference>
<dbReference type="InterPro" id="IPR017441">
    <property type="entry name" value="Protein_kinase_ATP_BS"/>
</dbReference>
<dbReference type="InterPro" id="IPR000858">
    <property type="entry name" value="S_locus_glycoprot_dom"/>
</dbReference>
<dbReference type="InterPro" id="IPR008271">
    <property type="entry name" value="Ser/Thr_kinase_AS"/>
</dbReference>
<dbReference type="InterPro" id="IPR024171">
    <property type="entry name" value="SRK-like_kinase"/>
</dbReference>
<dbReference type="PANTHER" id="PTHR47974">
    <property type="entry name" value="OS07G0415500 PROTEIN"/>
    <property type="match status" value="1"/>
</dbReference>
<dbReference type="PANTHER" id="PTHR47974:SF9">
    <property type="entry name" value="RECEPTOR-LIKE SERINE_THREONINE-PROTEIN KINASE"/>
    <property type="match status" value="1"/>
</dbReference>
<dbReference type="Pfam" id="PF01453">
    <property type="entry name" value="B_lectin"/>
    <property type="match status" value="1"/>
</dbReference>
<dbReference type="Pfam" id="PF00069">
    <property type="entry name" value="Pkinase"/>
    <property type="match status" value="1"/>
</dbReference>
<dbReference type="Pfam" id="PF00954">
    <property type="entry name" value="S_locus_glycop"/>
    <property type="match status" value="1"/>
</dbReference>
<dbReference type="PIRSF" id="PIRSF000641">
    <property type="entry name" value="SRK"/>
    <property type="match status" value="1"/>
</dbReference>
<dbReference type="SMART" id="SM00108">
    <property type="entry name" value="B_lectin"/>
    <property type="match status" value="1"/>
</dbReference>
<dbReference type="SMART" id="SM00220">
    <property type="entry name" value="S_TKc"/>
    <property type="match status" value="1"/>
</dbReference>
<dbReference type="SUPFAM" id="SSF51110">
    <property type="entry name" value="alpha-D-mannose-specific plant lectins"/>
    <property type="match status" value="2"/>
</dbReference>
<dbReference type="SUPFAM" id="SSF56112">
    <property type="entry name" value="Protein kinase-like (PK-like)"/>
    <property type="match status" value="1"/>
</dbReference>
<dbReference type="PROSITE" id="PS50927">
    <property type="entry name" value="BULB_LECTIN"/>
    <property type="match status" value="1"/>
</dbReference>
<dbReference type="PROSITE" id="PS00107">
    <property type="entry name" value="PROTEIN_KINASE_ATP"/>
    <property type="match status" value="1"/>
</dbReference>
<dbReference type="PROSITE" id="PS50011">
    <property type="entry name" value="PROTEIN_KINASE_DOM"/>
    <property type="match status" value="1"/>
</dbReference>
<dbReference type="PROSITE" id="PS00108">
    <property type="entry name" value="PROTEIN_KINASE_ST"/>
    <property type="match status" value="1"/>
</dbReference>
<evidence type="ECO:0000250" key="1"/>
<evidence type="ECO:0000250" key="2">
    <source>
        <dbReference type="UniProtKB" id="Q9LPZ9"/>
    </source>
</evidence>
<evidence type="ECO:0000255" key="3"/>
<evidence type="ECO:0000255" key="4">
    <source>
        <dbReference type="PROSITE-ProRule" id="PRU00038"/>
    </source>
</evidence>
<evidence type="ECO:0000255" key="5">
    <source>
        <dbReference type="PROSITE-ProRule" id="PRU00159"/>
    </source>
</evidence>
<evidence type="ECO:0000255" key="6">
    <source>
        <dbReference type="PROSITE-ProRule" id="PRU10027"/>
    </source>
</evidence>
<evidence type="ECO:0000305" key="7">
    <source>
    </source>
</evidence>
<name>Y1343_ARATH</name>
<proteinExistence type="evidence at protein level"/>
<organism>
    <name type="scientific">Arabidopsis thaliana</name>
    <name type="common">Mouse-ear cress</name>
    <dbReference type="NCBI Taxonomy" id="3702"/>
    <lineage>
        <taxon>Eukaryota</taxon>
        <taxon>Viridiplantae</taxon>
        <taxon>Streptophyta</taxon>
        <taxon>Embryophyta</taxon>
        <taxon>Tracheophyta</taxon>
        <taxon>Spermatophyta</taxon>
        <taxon>Magnoliopsida</taxon>
        <taxon>eudicotyledons</taxon>
        <taxon>Gunneridae</taxon>
        <taxon>Pentapetalae</taxon>
        <taxon>rosids</taxon>
        <taxon>malvids</taxon>
        <taxon>Brassicales</taxon>
        <taxon>Brassicaceae</taxon>
        <taxon>Camelineae</taxon>
        <taxon>Arabidopsis</taxon>
    </lineage>
</organism>
<reference key="1">
    <citation type="journal article" date="2000" name="Nature">
        <title>Sequence and analysis of chromosome 1 of the plant Arabidopsis thaliana.</title>
        <authorList>
            <person name="Theologis A."/>
            <person name="Ecker J.R."/>
            <person name="Palm C.J."/>
            <person name="Federspiel N.A."/>
            <person name="Kaul S."/>
            <person name="White O."/>
            <person name="Alonso J."/>
            <person name="Altafi H."/>
            <person name="Araujo R."/>
            <person name="Bowman C.L."/>
            <person name="Brooks S.Y."/>
            <person name="Buehler E."/>
            <person name="Chan A."/>
            <person name="Chao Q."/>
            <person name="Chen H."/>
            <person name="Cheuk R.F."/>
            <person name="Chin C.W."/>
            <person name="Chung M.K."/>
            <person name="Conn L."/>
            <person name="Conway A.B."/>
            <person name="Conway A.R."/>
            <person name="Creasy T.H."/>
            <person name="Dewar K."/>
            <person name="Dunn P."/>
            <person name="Etgu P."/>
            <person name="Feldblyum T.V."/>
            <person name="Feng J.-D."/>
            <person name="Fong B."/>
            <person name="Fujii C.Y."/>
            <person name="Gill J.E."/>
            <person name="Goldsmith A.D."/>
            <person name="Haas B."/>
            <person name="Hansen N.F."/>
            <person name="Hughes B."/>
            <person name="Huizar L."/>
            <person name="Hunter J.L."/>
            <person name="Jenkins J."/>
            <person name="Johnson-Hopson C."/>
            <person name="Khan S."/>
            <person name="Khaykin E."/>
            <person name="Kim C.J."/>
            <person name="Koo H.L."/>
            <person name="Kremenetskaia I."/>
            <person name="Kurtz D.B."/>
            <person name="Kwan A."/>
            <person name="Lam B."/>
            <person name="Langin-Hooper S."/>
            <person name="Lee A."/>
            <person name="Lee J.M."/>
            <person name="Lenz C.A."/>
            <person name="Li J.H."/>
            <person name="Li Y.-P."/>
            <person name="Lin X."/>
            <person name="Liu S.X."/>
            <person name="Liu Z.A."/>
            <person name="Luros J.S."/>
            <person name="Maiti R."/>
            <person name="Marziali A."/>
            <person name="Militscher J."/>
            <person name="Miranda M."/>
            <person name="Nguyen M."/>
            <person name="Nierman W.C."/>
            <person name="Osborne B.I."/>
            <person name="Pai G."/>
            <person name="Peterson J."/>
            <person name="Pham P.K."/>
            <person name="Rizzo M."/>
            <person name="Rooney T."/>
            <person name="Rowley D."/>
            <person name="Sakano H."/>
            <person name="Salzberg S.L."/>
            <person name="Schwartz J.R."/>
            <person name="Shinn P."/>
            <person name="Southwick A.M."/>
            <person name="Sun H."/>
            <person name="Tallon L.J."/>
            <person name="Tambunga G."/>
            <person name="Toriumi M.J."/>
            <person name="Town C.D."/>
            <person name="Utterback T."/>
            <person name="Van Aken S."/>
            <person name="Vaysberg M."/>
            <person name="Vysotskaia V.S."/>
            <person name="Walker M."/>
            <person name="Wu D."/>
            <person name="Yu G."/>
            <person name="Fraser C.M."/>
            <person name="Venter J.C."/>
            <person name="Davis R.W."/>
        </authorList>
    </citation>
    <scope>NUCLEOTIDE SEQUENCE [LARGE SCALE GENOMIC DNA]</scope>
    <source>
        <strain>cv. Columbia</strain>
    </source>
</reference>
<reference key="2">
    <citation type="journal article" date="2017" name="Plant J.">
        <title>Araport11: a complete reannotation of the Arabidopsis thaliana reference genome.</title>
        <authorList>
            <person name="Cheng C.Y."/>
            <person name="Krishnakumar V."/>
            <person name="Chan A.P."/>
            <person name="Thibaud-Nissen F."/>
            <person name="Schobel S."/>
            <person name="Town C.D."/>
        </authorList>
    </citation>
    <scope>GENOME REANNOTATION</scope>
    <source>
        <strain>cv. Columbia</strain>
    </source>
</reference>
<reference key="3">
    <citation type="journal article" date="2003" name="Science">
        <title>Empirical analysis of transcriptional activity in the Arabidopsis genome.</title>
        <authorList>
            <person name="Yamada K."/>
            <person name="Lim J."/>
            <person name="Dale J.M."/>
            <person name="Chen H."/>
            <person name="Shinn P."/>
            <person name="Palm C.J."/>
            <person name="Southwick A.M."/>
            <person name="Wu H.C."/>
            <person name="Kim C.J."/>
            <person name="Nguyen M."/>
            <person name="Pham P.K."/>
            <person name="Cheuk R.F."/>
            <person name="Karlin-Newmann G."/>
            <person name="Liu S.X."/>
            <person name="Lam B."/>
            <person name="Sakano H."/>
            <person name="Wu T."/>
            <person name="Yu G."/>
            <person name="Miranda M."/>
            <person name="Quach H.L."/>
            <person name="Tripp M."/>
            <person name="Chang C.H."/>
            <person name="Lee J.M."/>
            <person name="Toriumi M.J."/>
            <person name="Chan M.M."/>
            <person name="Tang C.C."/>
            <person name="Onodera C.S."/>
            <person name="Deng J.M."/>
            <person name="Akiyama K."/>
            <person name="Ansari Y."/>
            <person name="Arakawa T."/>
            <person name="Banh J."/>
            <person name="Banno F."/>
            <person name="Bowser L."/>
            <person name="Brooks S.Y."/>
            <person name="Carninci P."/>
            <person name="Chao Q."/>
            <person name="Choy N."/>
            <person name="Enju A."/>
            <person name="Goldsmith A.D."/>
            <person name="Gurjal M."/>
            <person name="Hansen N.F."/>
            <person name="Hayashizaki Y."/>
            <person name="Johnson-Hopson C."/>
            <person name="Hsuan V.W."/>
            <person name="Iida K."/>
            <person name="Karnes M."/>
            <person name="Khan S."/>
            <person name="Koesema E."/>
            <person name="Ishida J."/>
            <person name="Jiang P.X."/>
            <person name="Jones T."/>
            <person name="Kawai J."/>
            <person name="Kamiya A."/>
            <person name="Meyers C."/>
            <person name="Nakajima M."/>
            <person name="Narusaka M."/>
            <person name="Seki M."/>
            <person name="Sakurai T."/>
            <person name="Satou M."/>
            <person name="Tamse R."/>
            <person name="Vaysberg M."/>
            <person name="Wallender E.K."/>
            <person name="Wong C."/>
            <person name="Yamamura Y."/>
            <person name="Yuan S."/>
            <person name="Shinozaki K."/>
            <person name="Davis R.W."/>
            <person name="Theologis A."/>
            <person name="Ecker J.R."/>
        </authorList>
    </citation>
    <scope>NUCLEOTIDE SEQUENCE [LARGE SCALE MRNA]</scope>
    <source>
        <strain>cv. Columbia</strain>
    </source>
</reference>
<reference key="4">
    <citation type="journal article" date="2007" name="Mol. Cell. Proteomics">
        <title>A high content in lipid-modified peripheral proteins and integral receptor kinases features in the arabidopsis plasma membrane proteome.</title>
        <authorList>
            <person name="Marmagne A."/>
            <person name="Ferro M."/>
            <person name="Meinnel T."/>
            <person name="Bruley C."/>
            <person name="Kuhn L."/>
            <person name="Garin J."/>
            <person name="Barbier-Brygoo H."/>
            <person name="Ephritikhine G."/>
        </authorList>
    </citation>
    <scope>IDENTIFICATION BY MASS SPECTROMETRY</scope>
    <scope>SUBCELLULAR LOCATION [LARGE SCALE ANALYSIS]</scope>
</reference>
<protein>
    <recommendedName>
        <fullName>G-type lectin S-receptor-like serine/threonine-protein kinase At1g34300</fullName>
        <ecNumber>2.7.11.1</ecNumber>
    </recommendedName>
</protein>
<accession>Q9XID3</accession>
<comment type="catalytic activity">
    <reaction>
        <text>L-seryl-[protein] + ATP = O-phospho-L-seryl-[protein] + ADP + H(+)</text>
        <dbReference type="Rhea" id="RHEA:17989"/>
        <dbReference type="Rhea" id="RHEA-COMP:9863"/>
        <dbReference type="Rhea" id="RHEA-COMP:11604"/>
        <dbReference type="ChEBI" id="CHEBI:15378"/>
        <dbReference type="ChEBI" id="CHEBI:29999"/>
        <dbReference type="ChEBI" id="CHEBI:30616"/>
        <dbReference type="ChEBI" id="CHEBI:83421"/>
        <dbReference type="ChEBI" id="CHEBI:456216"/>
        <dbReference type="EC" id="2.7.11.1"/>
    </reaction>
</comment>
<comment type="catalytic activity">
    <reaction>
        <text>L-threonyl-[protein] + ATP = O-phospho-L-threonyl-[protein] + ADP + H(+)</text>
        <dbReference type="Rhea" id="RHEA:46608"/>
        <dbReference type="Rhea" id="RHEA-COMP:11060"/>
        <dbReference type="Rhea" id="RHEA-COMP:11605"/>
        <dbReference type="ChEBI" id="CHEBI:15378"/>
        <dbReference type="ChEBI" id="CHEBI:30013"/>
        <dbReference type="ChEBI" id="CHEBI:30616"/>
        <dbReference type="ChEBI" id="CHEBI:61977"/>
        <dbReference type="ChEBI" id="CHEBI:456216"/>
        <dbReference type="EC" id="2.7.11.1"/>
    </reaction>
</comment>
<comment type="subcellular location">
    <subcellularLocation>
        <location evidence="7">Cell membrane</location>
        <topology evidence="7">Single-pass type I membrane protein</topology>
    </subcellularLocation>
</comment>
<comment type="similarity">
    <text evidence="5">Belongs to the protein kinase superfamily. Ser/Thr protein kinase family.</text>
</comment>
<feature type="signal peptide" evidence="3">
    <location>
        <begin position="1"/>
        <end position="25"/>
    </location>
</feature>
<feature type="chain" id="PRO_0000401314" description="G-type lectin S-receptor-like serine/threonine-protein kinase At1g34300">
    <location>
        <begin position="26"/>
        <end position="829"/>
    </location>
</feature>
<feature type="topological domain" description="Extracellular" evidence="3">
    <location>
        <begin position="26"/>
        <end position="421"/>
    </location>
</feature>
<feature type="transmembrane region" description="Helical" evidence="3">
    <location>
        <begin position="422"/>
        <end position="442"/>
    </location>
</feature>
<feature type="topological domain" description="Cytoplasmic" evidence="3">
    <location>
        <begin position="443"/>
        <end position="829"/>
    </location>
</feature>
<feature type="domain" description="Bulb-type lectin 1" evidence="4">
    <location>
        <begin position="26"/>
        <end position="140"/>
    </location>
</feature>
<feature type="domain" description="Bulb-type lectin 2" evidence="4">
    <location>
        <begin position="143"/>
        <end position="260"/>
    </location>
</feature>
<feature type="domain" description="EGF-like">
    <location>
        <begin position="264"/>
        <end position="301"/>
    </location>
</feature>
<feature type="domain" description="Apple">
    <location>
        <begin position="317"/>
        <end position="399"/>
    </location>
</feature>
<feature type="domain" description="Protein kinase" evidence="5">
    <location>
        <begin position="484"/>
        <end position="759"/>
    </location>
</feature>
<feature type="region of interest" description="CaM-binding" evidence="1">
    <location>
        <begin position="572"/>
        <end position="589"/>
    </location>
</feature>
<feature type="active site" description="Proton acceptor" evidence="5 6">
    <location>
        <position position="608"/>
    </location>
</feature>
<feature type="binding site" evidence="5">
    <location>
        <begin position="490"/>
        <end position="498"/>
    </location>
    <ligand>
        <name>ATP</name>
        <dbReference type="ChEBI" id="CHEBI:30616"/>
    </ligand>
</feature>
<feature type="binding site" evidence="5">
    <location>
        <position position="512"/>
    </location>
    <ligand>
        <name>ATP</name>
        <dbReference type="ChEBI" id="CHEBI:30616"/>
    </ligand>
</feature>
<feature type="modified residue" description="Phosphoserine" evidence="2">
    <location>
        <position position="532"/>
    </location>
</feature>
<feature type="modified residue" description="Phosphoserine" evidence="2">
    <location>
        <position position="625"/>
    </location>
</feature>
<feature type="modified residue" description="Phosphoserine" evidence="2">
    <location>
        <position position="799"/>
    </location>
</feature>
<feature type="glycosylation site" description="N-linked (GlcNAc...) asparagine" evidence="3">
    <location>
        <position position="46"/>
    </location>
</feature>
<feature type="glycosylation site" description="N-linked (GlcNAc...) asparagine" evidence="3">
    <location>
        <position position="98"/>
    </location>
</feature>
<feature type="glycosylation site" description="N-linked (GlcNAc...) asparagine" evidence="3">
    <location>
        <position position="130"/>
    </location>
</feature>
<feature type="glycosylation site" description="N-linked (GlcNAc...) asparagine" evidence="3">
    <location>
        <position position="151"/>
    </location>
</feature>
<feature type="glycosylation site" description="N-linked (GlcNAc...) asparagine" evidence="3">
    <location>
        <position position="172"/>
    </location>
</feature>
<feature type="glycosylation site" description="N-linked (GlcNAc...) asparagine" evidence="3">
    <location>
        <position position="178"/>
    </location>
</feature>
<feature type="glycosylation site" description="N-linked (GlcNAc...) asparagine" evidence="3">
    <location>
        <position position="189"/>
    </location>
</feature>
<feature type="glycosylation site" description="N-linked (GlcNAc...) asparagine" evidence="3">
    <location>
        <position position="195"/>
    </location>
</feature>
<feature type="glycosylation site" description="N-linked (GlcNAc...) asparagine" evidence="3">
    <location>
        <position position="283"/>
    </location>
</feature>
<feature type="glycosylation site" description="N-linked (GlcNAc...) asparagine" evidence="3">
    <location>
        <position position="320"/>
    </location>
</feature>
<feature type="glycosylation site" description="N-linked (GlcNAc...) asparagine" evidence="3">
    <location>
        <position position="416"/>
    </location>
</feature>
<feature type="disulfide bond" evidence="4">
    <location>
        <begin position="268"/>
        <end position="280"/>
    </location>
</feature>
<feature type="disulfide bond" evidence="4">
    <location>
        <begin position="274"/>
        <end position="289"/>
    </location>
</feature>
<feature type="disulfide bond" evidence="4">
    <location>
        <begin position="317"/>
        <end position="399"/>
    </location>
</feature>
<feature type="disulfide bond" evidence="4">
    <location>
        <begin position="350"/>
        <end position="373"/>
    </location>
</feature>
<feature type="disulfide bond" evidence="4">
    <location>
        <begin position="354"/>
        <end position="360"/>
    </location>
</feature>